<reference key="1">
    <citation type="submission" date="2007-08" db="EMBL/GenBank/DDBJ databases">
        <title>Complete sequence of Shewanella sediminis HAW-EB3.</title>
        <authorList>
            <consortium name="US DOE Joint Genome Institute"/>
            <person name="Copeland A."/>
            <person name="Lucas S."/>
            <person name="Lapidus A."/>
            <person name="Barry K."/>
            <person name="Glavina del Rio T."/>
            <person name="Dalin E."/>
            <person name="Tice H."/>
            <person name="Pitluck S."/>
            <person name="Chertkov O."/>
            <person name="Brettin T."/>
            <person name="Bruce D."/>
            <person name="Detter J.C."/>
            <person name="Han C."/>
            <person name="Schmutz J."/>
            <person name="Larimer F."/>
            <person name="Land M."/>
            <person name="Hauser L."/>
            <person name="Kyrpides N."/>
            <person name="Kim E."/>
            <person name="Zhao J.-S."/>
            <person name="Richardson P."/>
        </authorList>
    </citation>
    <scope>NUCLEOTIDE SEQUENCE [LARGE SCALE GENOMIC DNA]</scope>
    <source>
        <strain>HAW-EB3</strain>
    </source>
</reference>
<sequence length="380" mass="42011">MSETTHPTFAMVAGELSGDILGAGLIKALQHQYPDARFVGIGGPRMEALGFESIFSFEELAVMGIVEVLSRLQRLLKVRKTLIDEICSIEPACFIGIDAPDFNIGLELKLKARGIKTVHYVSPSVWAWRPKRIFKIAKATDMVLSLLPFEKAFYDKHDVPCTFVGHTLADDIPLISDKTAARNLLGLDADAEYLAVLPGSRGGELKQLAEPFVKAASLIKKRYPDIRFVTPLVNQKRREQFEEALKLHAPDLEITLVEGHSREVMAASDCILLASGTATLEAMLVKRPMVVAYRVSPITYKIAKGMMQIDQYSLPNLLSGETLVTELIQENCTESLIADAISEQLDSDFSPLKEKFMQLHKGLKCNASERAAEAVIKLIQ</sequence>
<name>LPXB_SHESH</name>
<proteinExistence type="inferred from homology"/>
<accession>A8FY29</accession>
<feature type="chain" id="PRO_1000080286" description="Lipid-A-disaccharide synthase">
    <location>
        <begin position="1"/>
        <end position="380"/>
    </location>
</feature>
<dbReference type="EC" id="2.4.1.182" evidence="1"/>
<dbReference type="EMBL" id="CP000821">
    <property type="protein sequence ID" value="ABV37752.1"/>
    <property type="molecule type" value="Genomic_DNA"/>
</dbReference>
<dbReference type="RefSeq" id="WP_012143482.1">
    <property type="nucleotide sequence ID" value="NC_009831.1"/>
</dbReference>
<dbReference type="SMR" id="A8FY29"/>
<dbReference type="STRING" id="425104.Ssed_3148"/>
<dbReference type="CAZy" id="GT19">
    <property type="family name" value="Glycosyltransferase Family 19"/>
</dbReference>
<dbReference type="KEGG" id="sse:Ssed_3148"/>
<dbReference type="eggNOG" id="COG0763">
    <property type="taxonomic scope" value="Bacteria"/>
</dbReference>
<dbReference type="HOGENOM" id="CLU_036577_3_0_6"/>
<dbReference type="OrthoDB" id="9801642at2"/>
<dbReference type="UniPathway" id="UPA00973"/>
<dbReference type="Proteomes" id="UP000002015">
    <property type="component" value="Chromosome"/>
</dbReference>
<dbReference type="GO" id="GO:0016020">
    <property type="term" value="C:membrane"/>
    <property type="evidence" value="ECO:0007669"/>
    <property type="project" value="GOC"/>
</dbReference>
<dbReference type="GO" id="GO:0008915">
    <property type="term" value="F:lipid-A-disaccharide synthase activity"/>
    <property type="evidence" value="ECO:0007669"/>
    <property type="project" value="UniProtKB-UniRule"/>
</dbReference>
<dbReference type="GO" id="GO:0005543">
    <property type="term" value="F:phospholipid binding"/>
    <property type="evidence" value="ECO:0007669"/>
    <property type="project" value="TreeGrafter"/>
</dbReference>
<dbReference type="GO" id="GO:0009245">
    <property type="term" value="P:lipid A biosynthetic process"/>
    <property type="evidence" value="ECO:0007669"/>
    <property type="project" value="UniProtKB-UniRule"/>
</dbReference>
<dbReference type="CDD" id="cd01635">
    <property type="entry name" value="Glycosyltransferase_GTB-type"/>
    <property type="match status" value="1"/>
</dbReference>
<dbReference type="HAMAP" id="MF_00392">
    <property type="entry name" value="LpxB"/>
    <property type="match status" value="1"/>
</dbReference>
<dbReference type="InterPro" id="IPR003835">
    <property type="entry name" value="Glyco_trans_19"/>
</dbReference>
<dbReference type="NCBIfam" id="TIGR00215">
    <property type="entry name" value="lpxB"/>
    <property type="match status" value="1"/>
</dbReference>
<dbReference type="PANTHER" id="PTHR30372">
    <property type="entry name" value="LIPID-A-DISACCHARIDE SYNTHASE"/>
    <property type="match status" value="1"/>
</dbReference>
<dbReference type="PANTHER" id="PTHR30372:SF4">
    <property type="entry name" value="LIPID-A-DISACCHARIDE SYNTHASE, MITOCHONDRIAL-RELATED"/>
    <property type="match status" value="1"/>
</dbReference>
<dbReference type="Pfam" id="PF02684">
    <property type="entry name" value="LpxB"/>
    <property type="match status" value="1"/>
</dbReference>
<dbReference type="SUPFAM" id="SSF53756">
    <property type="entry name" value="UDP-Glycosyltransferase/glycogen phosphorylase"/>
    <property type="match status" value="1"/>
</dbReference>
<comment type="function">
    <text evidence="1">Condensation of UDP-2,3-diacylglucosamine and 2,3-diacylglucosamine-1-phosphate to form lipid A disaccharide, a precursor of lipid A, a phosphorylated glycolipid that anchors the lipopolysaccharide to the outer membrane of the cell.</text>
</comment>
<comment type="catalytic activity">
    <reaction evidence="1">
        <text>a lipid X + a UDP-2-N,3-O-bis[(3R)-3-hydroxyacyl]-alpha-D-glucosamine = a lipid A disaccharide + UDP + H(+)</text>
        <dbReference type="Rhea" id="RHEA:67828"/>
        <dbReference type="ChEBI" id="CHEBI:15378"/>
        <dbReference type="ChEBI" id="CHEBI:58223"/>
        <dbReference type="ChEBI" id="CHEBI:137748"/>
        <dbReference type="ChEBI" id="CHEBI:176338"/>
        <dbReference type="ChEBI" id="CHEBI:176343"/>
        <dbReference type="EC" id="2.4.1.182"/>
    </reaction>
</comment>
<comment type="pathway">
    <text evidence="1">Bacterial outer membrane biogenesis; LPS lipid A biosynthesis.</text>
</comment>
<comment type="similarity">
    <text evidence="1">Belongs to the LpxB family.</text>
</comment>
<gene>
    <name evidence="1" type="primary">lpxB</name>
    <name type="ordered locus">Ssed_3148</name>
</gene>
<protein>
    <recommendedName>
        <fullName evidence="1">Lipid-A-disaccharide synthase</fullName>
        <ecNumber evidence="1">2.4.1.182</ecNumber>
    </recommendedName>
</protein>
<evidence type="ECO:0000255" key="1">
    <source>
        <dbReference type="HAMAP-Rule" id="MF_00392"/>
    </source>
</evidence>
<keyword id="KW-0328">Glycosyltransferase</keyword>
<keyword id="KW-0441">Lipid A biosynthesis</keyword>
<keyword id="KW-0444">Lipid biosynthesis</keyword>
<keyword id="KW-0443">Lipid metabolism</keyword>
<keyword id="KW-1185">Reference proteome</keyword>
<keyword id="KW-0808">Transferase</keyword>
<organism>
    <name type="scientific">Shewanella sediminis (strain HAW-EB3)</name>
    <dbReference type="NCBI Taxonomy" id="425104"/>
    <lineage>
        <taxon>Bacteria</taxon>
        <taxon>Pseudomonadati</taxon>
        <taxon>Pseudomonadota</taxon>
        <taxon>Gammaproteobacteria</taxon>
        <taxon>Alteromonadales</taxon>
        <taxon>Shewanellaceae</taxon>
        <taxon>Shewanella</taxon>
    </lineage>
</organism>